<name>RS2_CARRP</name>
<feature type="chain" id="PRO_0000351985" description="Small ribosomal subunit protein uS2">
    <location>
        <begin position="1"/>
        <end position="216"/>
    </location>
</feature>
<proteinExistence type="inferred from homology"/>
<gene>
    <name evidence="1" type="primary">rpsB</name>
    <name type="ordered locus">CRP_020</name>
</gene>
<organism>
    <name type="scientific">Carsonella ruddii (strain PV)</name>
    <dbReference type="NCBI Taxonomy" id="387662"/>
    <lineage>
        <taxon>Bacteria</taxon>
        <taxon>Pseudomonadati</taxon>
        <taxon>Pseudomonadota</taxon>
        <taxon>Gammaproteobacteria</taxon>
        <taxon>Oceanospirillales</taxon>
        <taxon>Halomonadaceae</taxon>
        <taxon>Zymobacter group</taxon>
        <taxon>Candidatus Carsonella</taxon>
    </lineage>
</organism>
<protein>
    <recommendedName>
        <fullName evidence="1">Small ribosomal subunit protein uS2</fullName>
    </recommendedName>
    <alternativeName>
        <fullName evidence="2">30S ribosomal protein S2</fullName>
    </alternativeName>
</protein>
<evidence type="ECO:0000255" key="1">
    <source>
        <dbReference type="HAMAP-Rule" id="MF_00291"/>
    </source>
</evidence>
<evidence type="ECO:0000305" key="2"/>
<dbReference type="EMBL" id="AP009180">
    <property type="protein sequence ID" value="BAF35051.1"/>
    <property type="molecule type" value="Genomic_DNA"/>
</dbReference>
<dbReference type="RefSeq" id="WP_011672243.1">
    <property type="nucleotide sequence ID" value="NC_008512.1"/>
</dbReference>
<dbReference type="SMR" id="Q05FX0"/>
<dbReference type="STRING" id="387662.CRP_020"/>
<dbReference type="KEGG" id="crp:CRP_020"/>
<dbReference type="HOGENOM" id="CLU_040318_1_2_6"/>
<dbReference type="OrthoDB" id="9808036at2"/>
<dbReference type="Proteomes" id="UP000000777">
    <property type="component" value="Chromosome"/>
</dbReference>
<dbReference type="GO" id="GO:0015935">
    <property type="term" value="C:small ribosomal subunit"/>
    <property type="evidence" value="ECO:0007669"/>
    <property type="project" value="InterPro"/>
</dbReference>
<dbReference type="GO" id="GO:0003735">
    <property type="term" value="F:structural constituent of ribosome"/>
    <property type="evidence" value="ECO:0007669"/>
    <property type="project" value="InterPro"/>
</dbReference>
<dbReference type="GO" id="GO:0006412">
    <property type="term" value="P:translation"/>
    <property type="evidence" value="ECO:0007669"/>
    <property type="project" value="UniProtKB-UniRule"/>
</dbReference>
<dbReference type="CDD" id="cd01425">
    <property type="entry name" value="RPS2"/>
    <property type="match status" value="1"/>
</dbReference>
<dbReference type="Gene3D" id="3.40.50.10490">
    <property type="entry name" value="Glucose-6-phosphate isomerase like protein, domain 1"/>
    <property type="match status" value="1"/>
</dbReference>
<dbReference type="Gene3D" id="1.10.287.610">
    <property type="entry name" value="Helix hairpin bin"/>
    <property type="match status" value="1"/>
</dbReference>
<dbReference type="HAMAP" id="MF_00291_B">
    <property type="entry name" value="Ribosomal_uS2_B"/>
    <property type="match status" value="1"/>
</dbReference>
<dbReference type="InterPro" id="IPR001865">
    <property type="entry name" value="Ribosomal_uS2"/>
</dbReference>
<dbReference type="InterPro" id="IPR005706">
    <property type="entry name" value="Ribosomal_uS2_bac/mit/plastid"/>
</dbReference>
<dbReference type="InterPro" id="IPR023591">
    <property type="entry name" value="Ribosomal_uS2_flav_dom_sf"/>
</dbReference>
<dbReference type="NCBIfam" id="TIGR01011">
    <property type="entry name" value="rpsB_bact"/>
    <property type="match status" value="1"/>
</dbReference>
<dbReference type="PANTHER" id="PTHR12534">
    <property type="entry name" value="30S RIBOSOMAL PROTEIN S2 PROKARYOTIC AND ORGANELLAR"/>
    <property type="match status" value="1"/>
</dbReference>
<dbReference type="PANTHER" id="PTHR12534:SF0">
    <property type="entry name" value="SMALL RIBOSOMAL SUBUNIT PROTEIN US2M"/>
    <property type="match status" value="1"/>
</dbReference>
<dbReference type="Pfam" id="PF00318">
    <property type="entry name" value="Ribosomal_S2"/>
    <property type="match status" value="1"/>
</dbReference>
<dbReference type="PRINTS" id="PR00395">
    <property type="entry name" value="RIBOSOMALS2"/>
</dbReference>
<dbReference type="SUPFAM" id="SSF52313">
    <property type="entry name" value="Ribosomal protein S2"/>
    <property type="match status" value="1"/>
</dbReference>
<accession>Q05FX0</accession>
<comment type="similarity">
    <text evidence="1">Belongs to the universal ribosomal protein uS2 family.</text>
</comment>
<sequence length="216" mass="25617">MKIIHLINSDIFIGNNKKFLNFSMKKYIIFTINNLNIFDLKKIIISVLLLKKYIKFIYKKKMKILFIGTKNFFRELIYKFSRSIRQPFVCNKWISGSLTNLQNYKKMINKLKIIRKKIKFKSYTKKEKISFLKKEKKIEILFGGFRNLKKTPKLIIISDINKDKIIVNEAKRLKIKIASFLDSSDNCSKIDFILPCNNNSINSIKIILNILFKNLC</sequence>
<reference key="1">
    <citation type="journal article" date="2006" name="Science">
        <title>The 160-kilobase genome of the bacterial endosymbiont Carsonella.</title>
        <authorList>
            <person name="Nakabachi A."/>
            <person name="Yamashita A."/>
            <person name="Toh H."/>
            <person name="Ishikawa H."/>
            <person name="Dunbar H.E."/>
            <person name="Moran N.A."/>
            <person name="Hattori M."/>
        </authorList>
    </citation>
    <scope>NUCLEOTIDE SEQUENCE [LARGE SCALE GENOMIC DNA]</scope>
    <source>
        <strain>PV</strain>
    </source>
</reference>
<keyword id="KW-0687">Ribonucleoprotein</keyword>
<keyword id="KW-0689">Ribosomal protein</keyword>